<sequence length="150" mass="16805">MDSTNSKREFIKSALEANINRRAAVSLFDRFGGSSAVFEKQFQDAQHAVRAHGALKREAELGTLVRKAGQRFEALKRERSILRQPRDLPRVADIDALVDAVADLKEEVAVRLDALEENGEETPTHSSSEIKDTIVRWRLDDLPPVCPETP</sequence>
<gene>
    <name type="primary">ORF35</name>
</gene>
<keyword id="KW-1185">Reference proteome</keyword>
<reference key="1">
    <citation type="journal article" date="1999" name="J. Virol.">
        <title>Identification of a spliced gene from Kaposi's sarcoma-associated herpesvirus encoding a protein with similarities to latent membrane proteins 1 and 2A of Epstein-Barr virus.</title>
        <authorList>
            <person name="Glenn M."/>
            <person name="Rainbow L."/>
            <person name="Aurade F."/>
            <person name="Davison A."/>
            <person name="Schulz T.F."/>
        </authorList>
    </citation>
    <scope>NUCLEOTIDE SEQUENCE [LARGE SCALE GENOMIC DNA]</scope>
</reference>
<reference key="2">
    <citation type="journal article" date="2006" name="J. Gen. Virol.">
        <title>Kaposi's sarcoma-associated herpesvirus immune modulation: an overview.</title>
        <authorList>
            <person name="Rezaee S.A.R."/>
            <person name="Cunningham C."/>
            <person name="Davison A.J."/>
            <person name="Blackbourn D.J."/>
        </authorList>
    </citation>
    <scope>NUCLEOTIDE SEQUENCE [LARGE SCALE GENOMIC DNA]</scope>
</reference>
<organismHost>
    <name type="scientific">Homo sapiens</name>
    <name type="common">Human</name>
    <dbReference type="NCBI Taxonomy" id="9606"/>
</organismHost>
<accession>F5HCD4</accession>
<dbReference type="EMBL" id="AF148805">
    <property type="protein sequence ID" value="ABD28886.1"/>
    <property type="molecule type" value="Genomic_DNA"/>
</dbReference>
<dbReference type="RefSeq" id="YP_001129388.1">
    <property type="nucleotide sequence ID" value="NC_009333.1"/>
</dbReference>
<dbReference type="SMR" id="F5HCD4"/>
<dbReference type="BioGRID" id="1777015">
    <property type="interactions" value="5"/>
</dbReference>
<dbReference type="DNASU" id="4961512"/>
<dbReference type="GeneID" id="4961512"/>
<dbReference type="KEGG" id="vg:4961512"/>
<dbReference type="Proteomes" id="UP000000942">
    <property type="component" value="Segment"/>
</dbReference>
<dbReference type="InterPro" id="IPR008566">
    <property type="entry name" value="DUF848"/>
</dbReference>
<dbReference type="Pfam" id="PF05852">
    <property type="entry name" value="DUF848"/>
    <property type="match status" value="1"/>
</dbReference>
<proteinExistence type="predicted"/>
<name>ORF35_HHV8P</name>
<feature type="chain" id="PRO_0000423795" description="Protein ORF35">
    <location>
        <begin position="1"/>
        <end position="150"/>
    </location>
</feature>
<organism>
    <name type="scientific">Human herpesvirus 8 type P (isolate GK18)</name>
    <name type="common">HHV-8</name>
    <name type="synonym">Kaposi's sarcoma-associated herpesvirus</name>
    <dbReference type="NCBI Taxonomy" id="868565"/>
    <lineage>
        <taxon>Viruses</taxon>
        <taxon>Duplodnaviria</taxon>
        <taxon>Heunggongvirae</taxon>
        <taxon>Peploviricota</taxon>
        <taxon>Herviviricetes</taxon>
        <taxon>Herpesvirales</taxon>
        <taxon>Orthoherpesviridae</taxon>
        <taxon>Gammaherpesvirinae</taxon>
        <taxon>Rhadinovirus</taxon>
        <taxon>Rhadinovirus humangamma8</taxon>
        <taxon>Human herpesvirus 8</taxon>
    </lineage>
</organism>
<protein>
    <recommendedName>
        <fullName>Protein ORF35</fullName>
    </recommendedName>
</protein>